<evidence type="ECO:0000250" key="1"/>
<evidence type="ECO:0000255" key="2"/>
<evidence type="ECO:0000255" key="3">
    <source>
        <dbReference type="PROSITE-ProRule" id="PRU00174"/>
    </source>
</evidence>
<evidence type="ECO:0000256" key="4">
    <source>
        <dbReference type="SAM" id="MobiDB-lite"/>
    </source>
</evidence>
<evidence type="ECO:0000305" key="5"/>
<accession>O61397</accession>
<sequence>MIIARKKLQLQRLWRQRGCRVATYICLGVLVLFGFVYNSKGNSMSSIKSDSAAQQFDDLDDLTNKELPGGPDPNTIFRGSELGNYEPKEPEIPSNQPGEHGKPVPVTDEEGMAAGRAAEKEFGFNTYVSDMISMNRTIPDIRPEECKHWDYPEKLPTVSVVVVFHNEGWTPLLRTVHSVLLRSPPELIEQVVMVDDDSDKPHLKEKLDKYVTRFNGKVIVVRTEQREGLINARSIGAKHSTGEVVLFLDAHCEVNTNWLPPLLAPIKRNRKVMTVPVIDGIDSNSWEYRSVYGSPNAHHSGIFEWGLLYKETQITERETAHRKHNSQPFRSPTHAGGLFAINRLWFKELGYYDEGLQIWGGEQYELSFKIWQCGGGIVFVPCSHVGHVYRSHMPYSFGKFSGKPVISINMMRVVKTWMDDYSKYYLTREPQATNVNPGDISAQLALRDKLQCKSFKWYMENVAYDVLKSYPMLPPNDVWGEARNPATGKCLDRMGGIPGPMGATGCHGYGGNQLIRLNVQGQMAQGEWCLTANGIRIQANHCVKGTVNGFWSYDRKTKQIIHSQKRQCITVSESGSEVTLQTCTEDNERQKFVWKEFYQSS</sequence>
<reference key="1">
    <citation type="journal article" date="1998" name="J. Biol. Chem.">
        <title>cDNA cloning and expression of a family of UDP-N-acetyl-D-galactosamine:polypeptide N-acetylgalactosaminyltransferase sequence homologs from Caenorhabditis elegans.</title>
        <authorList>
            <person name="Hagen F.K."/>
            <person name="Nehrke K."/>
        </authorList>
    </citation>
    <scope>NUCLEOTIDE SEQUENCE [MRNA]</scope>
    <source>
        <strain>Bristol N2</strain>
    </source>
</reference>
<reference key="2">
    <citation type="journal article" date="1998" name="Science">
        <title>Genome sequence of the nematode C. elegans: a platform for investigating biology.</title>
        <authorList>
            <consortium name="The C. elegans sequencing consortium"/>
        </authorList>
    </citation>
    <scope>NUCLEOTIDE SEQUENCE [LARGE SCALE GENOMIC DNA]</scope>
    <source>
        <strain>Bristol N2</strain>
    </source>
</reference>
<gene>
    <name type="primary">gly-7</name>
    <name type="ORF">Y46H3A.6</name>
</gene>
<proteinExistence type="evidence at transcript level"/>
<keyword id="KW-1015">Disulfide bond</keyword>
<keyword id="KW-0325">Glycoprotein</keyword>
<keyword id="KW-0328">Glycosyltransferase</keyword>
<keyword id="KW-0333">Golgi apparatus</keyword>
<keyword id="KW-0430">Lectin</keyword>
<keyword id="KW-0464">Manganese</keyword>
<keyword id="KW-0472">Membrane</keyword>
<keyword id="KW-0479">Metal-binding</keyword>
<keyword id="KW-1185">Reference proteome</keyword>
<keyword id="KW-0735">Signal-anchor</keyword>
<keyword id="KW-0808">Transferase</keyword>
<keyword id="KW-0812">Transmembrane</keyword>
<keyword id="KW-1133">Transmembrane helix</keyword>
<name>GALT7_CAEEL</name>
<organism>
    <name type="scientific">Caenorhabditis elegans</name>
    <dbReference type="NCBI Taxonomy" id="6239"/>
    <lineage>
        <taxon>Eukaryota</taxon>
        <taxon>Metazoa</taxon>
        <taxon>Ecdysozoa</taxon>
        <taxon>Nematoda</taxon>
        <taxon>Chromadorea</taxon>
        <taxon>Rhabditida</taxon>
        <taxon>Rhabditina</taxon>
        <taxon>Rhabditomorpha</taxon>
        <taxon>Rhabditoidea</taxon>
        <taxon>Rhabditidae</taxon>
        <taxon>Peloderinae</taxon>
        <taxon>Caenorhabditis</taxon>
    </lineage>
</organism>
<dbReference type="EC" id="2.4.1.-"/>
<dbReference type="EMBL" id="AF031841">
    <property type="protein sequence ID" value="AAC13677.1"/>
    <property type="molecule type" value="mRNA"/>
</dbReference>
<dbReference type="EMBL" id="FO081307">
    <property type="protein sequence ID" value="CCD70652.1"/>
    <property type="molecule type" value="Genomic_DNA"/>
</dbReference>
<dbReference type="PIR" id="T42251">
    <property type="entry name" value="T42251"/>
</dbReference>
<dbReference type="RefSeq" id="NP_503512.1">
    <property type="nucleotide sequence ID" value="NM_071111.6"/>
</dbReference>
<dbReference type="SMR" id="O61397"/>
<dbReference type="FunCoup" id="O61397">
    <property type="interactions" value="2519"/>
</dbReference>
<dbReference type="STRING" id="6239.Y46H3A.6a.1"/>
<dbReference type="CAZy" id="CBM13">
    <property type="family name" value="Carbohydrate-Binding Module Family 13"/>
</dbReference>
<dbReference type="CAZy" id="GT27">
    <property type="family name" value="Glycosyltransferase Family 27"/>
</dbReference>
<dbReference type="GlyCosmos" id="O61397">
    <property type="glycosylation" value="1 site, No reported glycans"/>
</dbReference>
<dbReference type="PaxDb" id="6239-Y46H3A.6"/>
<dbReference type="PeptideAtlas" id="O61397"/>
<dbReference type="EnsemblMetazoa" id="Y46H3A.6a.1">
    <property type="protein sequence ID" value="Y46H3A.6a.1"/>
    <property type="gene ID" value="WBGene00001632"/>
</dbReference>
<dbReference type="GeneID" id="178661"/>
<dbReference type="KEGG" id="cel:CELE_Y46H3A.6"/>
<dbReference type="UCSC" id="Y46H3A.6">
    <property type="organism name" value="c. elegans"/>
</dbReference>
<dbReference type="AGR" id="WB:WBGene00001632"/>
<dbReference type="CTD" id="178661"/>
<dbReference type="WormBase" id="Y46H3A.6a">
    <property type="protein sequence ID" value="CE24309"/>
    <property type="gene ID" value="WBGene00001632"/>
    <property type="gene designation" value="gly-7"/>
</dbReference>
<dbReference type="eggNOG" id="KOG3737">
    <property type="taxonomic scope" value="Eukaryota"/>
</dbReference>
<dbReference type="GeneTree" id="ENSGT00940000167329"/>
<dbReference type="HOGENOM" id="CLU_013477_0_1_1"/>
<dbReference type="InParanoid" id="O61397"/>
<dbReference type="OMA" id="QWFMDNI"/>
<dbReference type="OrthoDB" id="330637at2759"/>
<dbReference type="PhylomeDB" id="O61397"/>
<dbReference type="Reactome" id="R-CEL-913709">
    <property type="pathway name" value="O-linked glycosylation of mucins"/>
</dbReference>
<dbReference type="UniPathway" id="UPA00378"/>
<dbReference type="PRO" id="PR:O61397"/>
<dbReference type="Proteomes" id="UP000001940">
    <property type="component" value="Chromosome V"/>
</dbReference>
<dbReference type="Bgee" id="WBGene00001632">
    <property type="expression patterns" value="Expressed in pharyngeal muscle cell (C elegans) and 4 other cell types or tissues"/>
</dbReference>
<dbReference type="ExpressionAtlas" id="O61397">
    <property type="expression patterns" value="baseline and differential"/>
</dbReference>
<dbReference type="GO" id="GO:0005794">
    <property type="term" value="C:Golgi apparatus"/>
    <property type="evidence" value="ECO:0000318"/>
    <property type="project" value="GO_Central"/>
</dbReference>
<dbReference type="GO" id="GO:0000139">
    <property type="term" value="C:Golgi membrane"/>
    <property type="evidence" value="ECO:0007669"/>
    <property type="project" value="UniProtKB-SubCell"/>
</dbReference>
<dbReference type="GO" id="GO:0030246">
    <property type="term" value="F:carbohydrate binding"/>
    <property type="evidence" value="ECO:0007669"/>
    <property type="project" value="UniProtKB-KW"/>
</dbReference>
<dbReference type="GO" id="GO:0046872">
    <property type="term" value="F:metal ion binding"/>
    <property type="evidence" value="ECO:0007669"/>
    <property type="project" value="UniProtKB-KW"/>
</dbReference>
<dbReference type="GO" id="GO:0004653">
    <property type="term" value="F:polypeptide N-acetylgalactosaminyltransferase activity"/>
    <property type="evidence" value="ECO:0000318"/>
    <property type="project" value="GO_Central"/>
</dbReference>
<dbReference type="GO" id="GO:0006493">
    <property type="term" value="P:protein O-linked glycosylation"/>
    <property type="evidence" value="ECO:0000318"/>
    <property type="project" value="GO_Central"/>
</dbReference>
<dbReference type="CDD" id="cd23437">
    <property type="entry name" value="beta-trefoil_Ricin_GALNT7"/>
    <property type="match status" value="1"/>
</dbReference>
<dbReference type="CDD" id="cd02510">
    <property type="entry name" value="pp-GalNAc-T"/>
    <property type="match status" value="1"/>
</dbReference>
<dbReference type="FunFam" id="2.80.10.50:FF:000019">
    <property type="entry name" value="Polypeptide N-acetylgalactosaminyltransferase"/>
    <property type="match status" value="1"/>
</dbReference>
<dbReference type="FunFam" id="3.90.550.10:FF:000053">
    <property type="entry name" value="Polypeptide N-acetylgalactosaminyltransferase"/>
    <property type="match status" value="1"/>
</dbReference>
<dbReference type="Gene3D" id="2.80.10.50">
    <property type="match status" value="1"/>
</dbReference>
<dbReference type="Gene3D" id="3.90.550.10">
    <property type="entry name" value="Spore Coat Polysaccharide Biosynthesis Protein SpsA, Chain A"/>
    <property type="match status" value="1"/>
</dbReference>
<dbReference type="InterPro" id="IPR045885">
    <property type="entry name" value="GalNAc-T"/>
</dbReference>
<dbReference type="InterPro" id="IPR001173">
    <property type="entry name" value="Glyco_trans_2-like"/>
</dbReference>
<dbReference type="InterPro" id="IPR029044">
    <property type="entry name" value="Nucleotide-diphossugar_trans"/>
</dbReference>
<dbReference type="InterPro" id="IPR035992">
    <property type="entry name" value="Ricin_B-like_lectins"/>
</dbReference>
<dbReference type="InterPro" id="IPR000772">
    <property type="entry name" value="Ricin_B_lectin"/>
</dbReference>
<dbReference type="PANTHER" id="PTHR11675">
    <property type="entry name" value="N-ACETYLGALACTOSAMINYLTRANSFERASE"/>
    <property type="match status" value="1"/>
</dbReference>
<dbReference type="PANTHER" id="PTHR11675:SF68">
    <property type="entry name" value="N-ACETYLGALACTOSAMINYLTRANSFERASE 7"/>
    <property type="match status" value="1"/>
</dbReference>
<dbReference type="Pfam" id="PF00535">
    <property type="entry name" value="Glycos_transf_2"/>
    <property type="match status" value="1"/>
</dbReference>
<dbReference type="Pfam" id="PF00652">
    <property type="entry name" value="Ricin_B_lectin"/>
    <property type="match status" value="1"/>
</dbReference>
<dbReference type="SMART" id="SM00458">
    <property type="entry name" value="RICIN"/>
    <property type="match status" value="1"/>
</dbReference>
<dbReference type="SUPFAM" id="SSF53448">
    <property type="entry name" value="Nucleotide-diphospho-sugar transferases"/>
    <property type="match status" value="1"/>
</dbReference>
<dbReference type="SUPFAM" id="SSF50370">
    <property type="entry name" value="Ricin B-like lectins"/>
    <property type="match status" value="1"/>
</dbReference>
<dbReference type="PROSITE" id="PS50231">
    <property type="entry name" value="RICIN_B_LECTIN"/>
    <property type="match status" value="1"/>
</dbReference>
<comment type="function">
    <text evidence="1">Probable glycopeptide transferase involved in O-linked oligosaccharide biosynthesis. Glycopeptide transferases catalyze the transfer of an N-acetyl-D-galactosamine residue to an already glycosylated peptide (By similarity). In contrast to other members of the family, it does not act as a peptide transferase that transfers GalNAc onto serine or threonine residue on peptides that have been tested. Some peptide transferase activity is however not excluded, considering that its appropriate peptide substrate may remain unidentified.</text>
</comment>
<comment type="cofactor">
    <cofactor evidence="1">
        <name>Mn(2+)</name>
        <dbReference type="ChEBI" id="CHEBI:29035"/>
    </cofactor>
</comment>
<comment type="pathway">
    <text>Protein modification; protein glycosylation.</text>
</comment>
<comment type="subcellular location">
    <subcellularLocation>
        <location evidence="1">Golgi apparatus membrane</location>
        <topology evidence="1">Single-pass type II membrane protein</topology>
    </subcellularLocation>
</comment>
<comment type="domain">
    <text evidence="1">There are two conserved domains in the glycosyltransferase region: the N-terminal domain (domain A, also called GT1 motif), which is probably involved in manganese coordination and substrate binding and the C-terminal domain (domain B, also called Gal/GalNAc-T motif), which is probably involved in catalytic reaction and UDP-Gal binding.</text>
</comment>
<comment type="domain">
    <text evidence="1">The ricin B-type lectin domain binds to GalNAc and contributes to the glycopeptide specificity.</text>
</comment>
<comment type="similarity">
    <text evidence="5">Belongs to the glycosyltransferase 2 family. GalNAc-T subfamily.</text>
</comment>
<protein>
    <recommendedName>
        <fullName>Probable N-acetylgalactosaminyltransferase 7</fullName>
        <ecNumber>2.4.1.-</ecNumber>
    </recommendedName>
    <alternativeName>
        <fullName>Protein-UDP acetylgalactosaminyltransferase 7</fullName>
    </alternativeName>
    <alternativeName>
        <fullName>UDP-GalNAc:polypeptide N-acetylgalactosaminyltransferase 7</fullName>
        <shortName>pp-GaNTase 7</shortName>
    </alternativeName>
</protein>
<feature type="chain" id="PRO_0000059150" description="Probable N-acetylgalactosaminyltransferase 7">
    <location>
        <begin position="1"/>
        <end position="601"/>
    </location>
</feature>
<feature type="topological domain" description="Cytoplasmic" evidence="2">
    <location>
        <begin position="1"/>
        <end position="20"/>
    </location>
</feature>
<feature type="transmembrane region" description="Helical; Signal-anchor for type II membrane protein" evidence="2">
    <location>
        <begin position="21"/>
        <end position="38"/>
    </location>
</feature>
<feature type="topological domain" description="Lumenal" evidence="2">
    <location>
        <begin position="39"/>
        <end position="601"/>
    </location>
</feature>
<feature type="domain" description="Ricin B-type lectin" evidence="3">
    <location>
        <begin position="477"/>
        <end position="595"/>
    </location>
</feature>
<feature type="region of interest" description="Disordered" evidence="4">
    <location>
        <begin position="61"/>
        <end position="108"/>
    </location>
</feature>
<feature type="region of interest" description="Catalytic subdomain A">
    <location>
        <begin position="155"/>
        <end position="265"/>
    </location>
</feature>
<feature type="region of interest" description="Catalytic subdomain B">
    <location>
        <begin position="328"/>
        <end position="390"/>
    </location>
</feature>
<feature type="binding site" evidence="1">
    <location>
        <position position="196"/>
    </location>
    <ligand>
        <name>substrate</name>
    </ligand>
</feature>
<feature type="binding site" evidence="1">
    <location>
        <position position="226"/>
    </location>
    <ligand>
        <name>substrate</name>
    </ligand>
</feature>
<feature type="binding site" evidence="1">
    <location>
        <position position="249"/>
    </location>
    <ligand>
        <name>Mn(2+)</name>
        <dbReference type="ChEBI" id="CHEBI:29035"/>
    </ligand>
</feature>
<feature type="binding site" evidence="1">
    <location>
        <position position="251"/>
    </location>
    <ligand>
        <name>Mn(2+)</name>
        <dbReference type="ChEBI" id="CHEBI:29035"/>
    </ligand>
</feature>
<feature type="binding site" evidence="1">
    <location>
        <position position="359"/>
    </location>
    <ligand>
        <name>substrate</name>
    </ligand>
</feature>
<feature type="binding site" evidence="1">
    <location>
        <position position="387"/>
    </location>
    <ligand>
        <name>Mn(2+)</name>
        <dbReference type="ChEBI" id="CHEBI:29035"/>
    </ligand>
</feature>
<feature type="binding site" evidence="1">
    <location>
        <position position="390"/>
    </location>
    <ligand>
        <name>substrate</name>
    </ligand>
</feature>
<feature type="binding site" evidence="1">
    <location>
        <position position="395"/>
    </location>
    <ligand>
        <name>substrate</name>
    </ligand>
</feature>
<feature type="glycosylation site" description="N-linked (GlcNAc...) asparagine" evidence="2">
    <location>
        <position position="135"/>
    </location>
</feature>
<feature type="disulfide bond" evidence="3">
    <location>
        <begin position="146"/>
        <end position="382"/>
    </location>
</feature>
<feature type="disulfide bond" evidence="3">
    <location>
        <begin position="373"/>
        <end position="452"/>
    </location>
</feature>
<feature type="disulfide bond" evidence="3">
    <location>
        <begin position="490"/>
        <end position="506"/>
    </location>
</feature>
<feature type="disulfide bond" evidence="3">
    <location>
        <begin position="529"/>
        <end position="542"/>
    </location>
</feature>
<feature type="disulfide bond" evidence="3">
    <location>
        <begin position="568"/>
        <end position="583"/>
    </location>
</feature>